<feature type="chain" id="PRO_0000187143" description="2-dehydro-3-deoxyphosphooctonate aldolase">
    <location>
        <begin position="1"/>
        <end position="280"/>
    </location>
</feature>
<feature type="strand" evidence="2">
    <location>
        <begin position="3"/>
        <end position="5"/>
    </location>
</feature>
<feature type="strand" evidence="2">
    <location>
        <begin position="8"/>
        <end position="11"/>
    </location>
</feature>
<feature type="strand" evidence="2">
    <location>
        <begin position="17"/>
        <end position="24"/>
    </location>
</feature>
<feature type="helix" evidence="2">
    <location>
        <begin position="28"/>
        <end position="45"/>
    </location>
</feature>
<feature type="strand" evidence="2">
    <location>
        <begin position="49"/>
        <end position="55"/>
    </location>
</feature>
<feature type="strand" evidence="2">
    <location>
        <begin position="61"/>
        <end position="65"/>
    </location>
</feature>
<feature type="helix" evidence="2">
    <location>
        <begin position="71"/>
        <end position="85"/>
    </location>
</feature>
<feature type="strand" evidence="2">
    <location>
        <begin position="89"/>
        <end position="92"/>
    </location>
</feature>
<feature type="helix" evidence="2">
    <location>
        <begin position="96"/>
        <end position="98"/>
    </location>
</feature>
<feature type="helix" evidence="2">
    <location>
        <begin position="99"/>
        <end position="105"/>
    </location>
</feature>
<feature type="strand" evidence="2">
    <location>
        <begin position="107"/>
        <end position="111"/>
    </location>
</feature>
<feature type="helix" evidence="2">
    <location>
        <begin position="113"/>
        <end position="115"/>
    </location>
</feature>
<feature type="helix" evidence="2">
    <location>
        <begin position="119"/>
        <end position="127"/>
    </location>
</feature>
<feature type="strand" evidence="2">
    <location>
        <begin position="131"/>
        <end position="135"/>
    </location>
</feature>
<feature type="helix" evidence="2">
    <location>
        <begin position="142"/>
        <end position="144"/>
    </location>
</feature>
<feature type="helix" evidence="2">
    <location>
        <begin position="145"/>
        <end position="154"/>
    </location>
</feature>
<feature type="strand" evidence="2">
    <location>
        <begin position="160"/>
        <end position="164"/>
    </location>
</feature>
<feature type="strand" evidence="5">
    <location>
        <begin position="170"/>
        <end position="172"/>
    </location>
</feature>
<feature type="helix" evidence="2">
    <location>
        <begin position="180"/>
        <end position="187"/>
    </location>
</feature>
<feature type="turn" evidence="2">
    <location>
        <begin position="188"/>
        <end position="190"/>
    </location>
</feature>
<feature type="strand" evidence="2">
    <location>
        <begin position="193"/>
        <end position="196"/>
    </location>
</feature>
<feature type="helix" evidence="2">
    <location>
        <begin position="197"/>
        <end position="200"/>
    </location>
</feature>
<feature type="turn" evidence="5">
    <location>
        <begin position="201"/>
        <end position="203"/>
    </location>
</feature>
<feature type="turn" evidence="4">
    <location>
        <begin position="204"/>
        <end position="206"/>
    </location>
</feature>
<feature type="helix" evidence="4">
    <location>
        <begin position="208"/>
        <end position="211"/>
    </location>
</feature>
<feature type="helix" evidence="2">
    <location>
        <begin position="214"/>
        <end position="226"/>
    </location>
</feature>
<feature type="strand" evidence="2">
    <location>
        <begin position="231"/>
        <end position="236"/>
    </location>
</feature>
<feature type="turn" evidence="3">
    <location>
        <begin position="243"/>
        <end position="246"/>
    </location>
</feature>
<feature type="strand" evidence="3">
    <location>
        <begin position="251"/>
        <end position="253"/>
    </location>
</feature>
<feature type="helix" evidence="2">
    <location>
        <begin position="256"/>
        <end position="273"/>
    </location>
</feature>
<protein>
    <recommendedName>
        <fullName evidence="1">2-dehydro-3-deoxyphosphooctonate aldolase</fullName>
        <ecNumber evidence="1">2.5.1.55</ecNumber>
    </recommendedName>
    <alternativeName>
        <fullName evidence="1">3-deoxy-D-manno-octulosonic acid 8-phosphate synthase</fullName>
    </alternativeName>
    <alternativeName>
        <fullName evidence="1">KDO-8-phosphate synthase</fullName>
        <shortName evidence="1">KDO 8-P synthase</shortName>
        <shortName evidence="1">KDOPS</shortName>
    </alternativeName>
    <alternativeName>
        <fullName evidence="1">Phospho-2-dehydro-3-deoxyoctonate aldolase</fullName>
    </alternativeName>
</protein>
<dbReference type="EC" id="2.5.1.55" evidence="1"/>
<dbReference type="EMBL" id="AE002098">
    <property type="protein sequence ID" value="AAF41659.1"/>
    <property type="molecule type" value="Genomic_DNA"/>
</dbReference>
<dbReference type="PIR" id="B81100">
    <property type="entry name" value="B81100"/>
</dbReference>
<dbReference type="RefSeq" id="NP_274303.1">
    <property type="nucleotide sequence ID" value="NC_003112.2"/>
</dbReference>
<dbReference type="RefSeq" id="WP_002222386.1">
    <property type="nucleotide sequence ID" value="NC_003112.2"/>
</dbReference>
<dbReference type="PDB" id="2QKF">
    <property type="method" value="X-ray"/>
    <property type="resolution" value="1.75 A"/>
    <property type="chains" value="A/B/C/D=1-280"/>
</dbReference>
<dbReference type="PDB" id="3FYO">
    <property type="method" value="X-ray"/>
    <property type="resolution" value="1.90 A"/>
    <property type="chains" value="A/B/C/D=1-280"/>
</dbReference>
<dbReference type="PDB" id="3FYP">
    <property type="method" value="X-ray"/>
    <property type="resolution" value="1.85 A"/>
    <property type="chains" value="A/B/C/D=1-280"/>
</dbReference>
<dbReference type="PDB" id="3QPY">
    <property type="method" value="X-ray"/>
    <property type="resolution" value="1.95 A"/>
    <property type="chains" value="A/B/C/D=1-280"/>
</dbReference>
<dbReference type="PDB" id="3QPZ">
    <property type="method" value="X-ray"/>
    <property type="resolution" value="1.75 A"/>
    <property type="chains" value="A/B/C/D=1-280"/>
</dbReference>
<dbReference type="PDB" id="3QQ0">
    <property type="method" value="X-ray"/>
    <property type="resolution" value="1.90 A"/>
    <property type="chains" value="A/B/C/D=1-280"/>
</dbReference>
<dbReference type="PDB" id="3QQ1">
    <property type="method" value="X-ray"/>
    <property type="resolution" value="2.70 A"/>
    <property type="chains" value="A/B/C/D=1-280"/>
</dbReference>
<dbReference type="PDB" id="3STC">
    <property type="method" value="X-ray"/>
    <property type="resolution" value="1.91 A"/>
    <property type="chains" value="A/B/C/D=1-280"/>
</dbReference>
<dbReference type="PDB" id="3STE">
    <property type="method" value="X-ray"/>
    <property type="resolution" value="2.05 A"/>
    <property type="chains" value="A/B/C/D=1-280"/>
</dbReference>
<dbReference type="PDB" id="3STF">
    <property type="method" value="X-ray"/>
    <property type="resolution" value="1.90 A"/>
    <property type="chains" value="A/B/C/D=1-280"/>
</dbReference>
<dbReference type="PDB" id="3STG">
    <property type="method" value="X-ray"/>
    <property type="resolution" value="2.20 A"/>
    <property type="chains" value="A/B/C/D=1-280"/>
</dbReference>
<dbReference type="PDB" id="4JTE">
    <property type="method" value="X-ray"/>
    <property type="resolution" value="1.90 A"/>
    <property type="chains" value="A/B/C/D=1-280"/>
</dbReference>
<dbReference type="PDB" id="4JTF">
    <property type="method" value="X-ray"/>
    <property type="resolution" value="1.80 A"/>
    <property type="chains" value="A/B/C/D=1-280"/>
</dbReference>
<dbReference type="PDB" id="4JTG">
    <property type="method" value="X-ray"/>
    <property type="resolution" value="1.85 A"/>
    <property type="chains" value="A/B/C/D=1-280"/>
</dbReference>
<dbReference type="PDB" id="4JTH">
    <property type="method" value="X-ray"/>
    <property type="resolution" value="2.00 A"/>
    <property type="chains" value="A/B/C/D=1-280"/>
</dbReference>
<dbReference type="PDB" id="4JTI">
    <property type="method" value="X-ray"/>
    <property type="resolution" value="1.75 A"/>
    <property type="chains" value="A/B/C/D=1-280"/>
</dbReference>
<dbReference type="PDB" id="4JTJ">
    <property type="method" value="X-ray"/>
    <property type="resolution" value="1.75 A"/>
    <property type="chains" value="A/B/C/D=1-280"/>
</dbReference>
<dbReference type="PDB" id="4JTK">
    <property type="method" value="X-ray"/>
    <property type="resolution" value="1.86 A"/>
    <property type="chains" value="A/B/C/D=1-280"/>
</dbReference>
<dbReference type="PDB" id="4JTL">
    <property type="method" value="X-ray"/>
    <property type="resolution" value="2.10 A"/>
    <property type="chains" value="A/B/C/D=1-280"/>
</dbReference>
<dbReference type="PDBsum" id="2QKF"/>
<dbReference type="PDBsum" id="3FYO"/>
<dbReference type="PDBsum" id="3FYP"/>
<dbReference type="PDBsum" id="3QPY"/>
<dbReference type="PDBsum" id="3QPZ"/>
<dbReference type="PDBsum" id="3QQ0"/>
<dbReference type="PDBsum" id="3QQ1"/>
<dbReference type="PDBsum" id="3STC"/>
<dbReference type="PDBsum" id="3STE"/>
<dbReference type="PDBsum" id="3STF"/>
<dbReference type="PDBsum" id="3STG"/>
<dbReference type="PDBsum" id="4JTE"/>
<dbReference type="PDBsum" id="4JTF"/>
<dbReference type="PDBsum" id="4JTG"/>
<dbReference type="PDBsum" id="4JTH"/>
<dbReference type="PDBsum" id="4JTI"/>
<dbReference type="PDBsum" id="4JTJ"/>
<dbReference type="PDBsum" id="4JTK"/>
<dbReference type="PDBsum" id="4JTL"/>
<dbReference type="SMR" id="Q9JZ55"/>
<dbReference type="FunCoup" id="Q9JZ55">
    <property type="interactions" value="380"/>
</dbReference>
<dbReference type="STRING" id="122586.NMB1283"/>
<dbReference type="BindingDB" id="Q9JZ55"/>
<dbReference type="ChEMBL" id="CHEMBL1938218"/>
<dbReference type="PaxDb" id="122586-NMB1283"/>
<dbReference type="KEGG" id="nme:NMB1283"/>
<dbReference type="PATRIC" id="fig|122586.8.peg.1608"/>
<dbReference type="HOGENOM" id="CLU_036666_0_0_4"/>
<dbReference type="InParanoid" id="Q9JZ55"/>
<dbReference type="OrthoDB" id="9776934at2"/>
<dbReference type="BRENDA" id="2.5.1.55">
    <property type="organism ID" value="3593"/>
</dbReference>
<dbReference type="UniPathway" id="UPA00030"/>
<dbReference type="UniPathway" id="UPA00357">
    <property type="reaction ID" value="UER00474"/>
</dbReference>
<dbReference type="EvolutionaryTrace" id="Q9JZ55"/>
<dbReference type="PRO" id="PR:Q9JZ55"/>
<dbReference type="Proteomes" id="UP000000425">
    <property type="component" value="Chromosome"/>
</dbReference>
<dbReference type="GO" id="GO:0005829">
    <property type="term" value="C:cytosol"/>
    <property type="evidence" value="ECO:0000318"/>
    <property type="project" value="GO_Central"/>
</dbReference>
<dbReference type="GO" id="GO:0008676">
    <property type="term" value="F:3-deoxy-8-phosphooctulonate synthase activity"/>
    <property type="evidence" value="ECO:0000318"/>
    <property type="project" value="GO_Central"/>
</dbReference>
<dbReference type="GO" id="GO:0019294">
    <property type="term" value="P:keto-3-deoxy-D-manno-octulosonic acid biosynthetic process"/>
    <property type="evidence" value="ECO:0000318"/>
    <property type="project" value="GO_Central"/>
</dbReference>
<dbReference type="Gene3D" id="3.20.20.70">
    <property type="entry name" value="Aldolase class I"/>
    <property type="match status" value="1"/>
</dbReference>
<dbReference type="HAMAP" id="MF_00056">
    <property type="entry name" value="KDO8P_synth"/>
    <property type="match status" value="1"/>
</dbReference>
<dbReference type="InterPro" id="IPR013785">
    <property type="entry name" value="Aldolase_TIM"/>
</dbReference>
<dbReference type="InterPro" id="IPR006218">
    <property type="entry name" value="DAHP1/KDSA"/>
</dbReference>
<dbReference type="InterPro" id="IPR006269">
    <property type="entry name" value="KDO8P_synthase"/>
</dbReference>
<dbReference type="NCBIfam" id="TIGR01362">
    <property type="entry name" value="KDO8P_synth"/>
    <property type="match status" value="1"/>
</dbReference>
<dbReference type="NCBIfam" id="NF003543">
    <property type="entry name" value="PRK05198.1"/>
    <property type="match status" value="1"/>
</dbReference>
<dbReference type="NCBIfam" id="NF009109">
    <property type="entry name" value="PRK12457.1"/>
    <property type="match status" value="1"/>
</dbReference>
<dbReference type="PANTHER" id="PTHR21057">
    <property type="entry name" value="PHOSPHO-2-DEHYDRO-3-DEOXYHEPTONATE ALDOLASE"/>
    <property type="match status" value="1"/>
</dbReference>
<dbReference type="Pfam" id="PF00793">
    <property type="entry name" value="DAHP_synth_1"/>
    <property type="match status" value="1"/>
</dbReference>
<dbReference type="SUPFAM" id="SSF51569">
    <property type="entry name" value="Aldolase"/>
    <property type="match status" value="1"/>
</dbReference>
<sequence length="280" mass="30483">MDIKINDITLGNNSPFVLFGGINVLESLDSTLQTCAHYVEVTRKLGIPYIFKASFDKANRSSIHSYRGVGLEEGLKIFEKVKAEFGIPVITDVHEPHQCQPVAEVCDVIQLPAFLARQTDLVVAMAKTGNVVNIKKPQFLSPSQMKNIVEKFHEAGNGKLILCERGSSFGYDNLVVDMLGFGVMKQTCGNLPVIFDVTHSLQTRDAGSAASGGRRAQALDLALAGMATRLAGLFLESHPDPKLAKCDGPSALPLHLLEDFLIRIKALDDLIKSQPILTIE</sequence>
<gene>
    <name evidence="1" type="primary">kdsA</name>
    <name type="ordered locus">NMB1283</name>
</gene>
<reference key="1">
    <citation type="journal article" date="2000" name="Science">
        <title>Complete genome sequence of Neisseria meningitidis serogroup B strain MC58.</title>
        <authorList>
            <person name="Tettelin H."/>
            <person name="Saunders N.J."/>
            <person name="Heidelberg J.F."/>
            <person name="Jeffries A.C."/>
            <person name="Nelson K.E."/>
            <person name="Eisen J.A."/>
            <person name="Ketchum K.A."/>
            <person name="Hood D.W."/>
            <person name="Peden J.F."/>
            <person name="Dodson R.J."/>
            <person name="Nelson W.C."/>
            <person name="Gwinn M.L."/>
            <person name="DeBoy R.T."/>
            <person name="Peterson J.D."/>
            <person name="Hickey E.K."/>
            <person name="Haft D.H."/>
            <person name="Salzberg S.L."/>
            <person name="White O."/>
            <person name="Fleischmann R.D."/>
            <person name="Dougherty B.A."/>
            <person name="Mason T.M."/>
            <person name="Ciecko A."/>
            <person name="Parksey D.S."/>
            <person name="Blair E."/>
            <person name="Cittone H."/>
            <person name="Clark E.B."/>
            <person name="Cotton M.D."/>
            <person name="Utterback T.R."/>
            <person name="Khouri H.M."/>
            <person name="Qin H."/>
            <person name="Vamathevan J.J."/>
            <person name="Gill J."/>
            <person name="Scarlato V."/>
            <person name="Masignani V."/>
            <person name="Pizza M."/>
            <person name="Grandi G."/>
            <person name="Sun L."/>
            <person name="Smith H.O."/>
            <person name="Fraser C.M."/>
            <person name="Moxon E.R."/>
            <person name="Rappuoli R."/>
            <person name="Venter J.C."/>
        </authorList>
    </citation>
    <scope>NUCLEOTIDE SEQUENCE [LARGE SCALE GENOMIC DNA]</scope>
    <source>
        <strain>ATCC BAA-335 / MC58</strain>
    </source>
</reference>
<evidence type="ECO:0000255" key="1">
    <source>
        <dbReference type="HAMAP-Rule" id="MF_00056"/>
    </source>
</evidence>
<evidence type="ECO:0007829" key="2">
    <source>
        <dbReference type="PDB" id="2QKF"/>
    </source>
</evidence>
<evidence type="ECO:0007829" key="3">
    <source>
        <dbReference type="PDB" id="3STG"/>
    </source>
</evidence>
<evidence type="ECO:0007829" key="4">
    <source>
        <dbReference type="PDB" id="4JTF"/>
    </source>
</evidence>
<evidence type="ECO:0007829" key="5">
    <source>
        <dbReference type="PDB" id="4JTI"/>
    </source>
</evidence>
<comment type="catalytic activity">
    <reaction evidence="1">
        <text>D-arabinose 5-phosphate + phosphoenolpyruvate + H2O = 3-deoxy-alpha-D-manno-2-octulosonate-8-phosphate + phosphate</text>
        <dbReference type="Rhea" id="RHEA:14053"/>
        <dbReference type="ChEBI" id="CHEBI:15377"/>
        <dbReference type="ChEBI" id="CHEBI:43474"/>
        <dbReference type="ChEBI" id="CHEBI:57693"/>
        <dbReference type="ChEBI" id="CHEBI:58702"/>
        <dbReference type="ChEBI" id="CHEBI:85985"/>
        <dbReference type="EC" id="2.5.1.55"/>
    </reaction>
</comment>
<comment type="pathway">
    <text evidence="1">Carbohydrate biosynthesis; 3-deoxy-D-manno-octulosonate biosynthesis; 3-deoxy-D-manno-octulosonate from D-ribulose 5-phosphate: step 2/3.</text>
</comment>
<comment type="pathway">
    <text evidence="1">Bacterial outer membrane biogenesis; lipopolysaccharide biosynthesis.</text>
</comment>
<comment type="subcellular location">
    <subcellularLocation>
        <location evidence="1">Cytoplasm</location>
    </subcellularLocation>
</comment>
<comment type="similarity">
    <text evidence="1">Belongs to the KdsA family.</text>
</comment>
<name>KDSA_NEIMB</name>
<organism>
    <name type="scientific">Neisseria meningitidis serogroup B (strain ATCC BAA-335 / MC58)</name>
    <dbReference type="NCBI Taxonomy" id="122586"/>
    <lineage>
        <taxon>Bacteria</taxon>
        <taxon>Pseudomonadati</taxon>
        <taxon>Pseudomonadota</taxon>
        <taxon>Betaproteobacteria</taxon>
        <taxon>Neisseriales</taxon>
        <taxon>Neisseriaceae</taxon>
        <taxon>Neisseria</taxon>
    </lineage>
</organism>
<keyword id="KW-0002">3D-structure</keyword>
<keyword id="KW-0963">Cytoplasm</keyword>
<keyword id="KW-0448">Lipopolysaccharide biosynthesis</keyword>
<keyword id="KW-1185">Reference proteome</keyword>
<keyword id="KW-0808">Transferase</keyword>
<accession>Q9JZ55</accession>
<proteinExistence type="evidence at protein level"/>